<evidence type="ECO:0000255" key="1">
    <source>
        <dbReference type="HAMAP-Rule" id="MF_01113"/>
    </source>
</evidence>
<keyword id="KW-0963">Cytoplasm</keyword>
<keyword id="KW-0227">DNA damage</keyword>
<keyword id="KW-0234">DNA repair</keyword>
<keyword id="KW-0235">DNA replication</keyword>
<keyword id="KW-0238">DNA-binding</keyword>
<keyword id="KW-0239">DNA-directed DNA polymerase</keyword>
<keyword id="KW-0460">Magnesium</keyword>
<keyword id="KW-0479">Metal-binding</keyword>
<keyword id="KW-0515">Mutator protein</keyword>
<keyword id="KW-0548">Nucleotidyltransferase</keyword>
<keyword id="KW-0808">Transferase</keyword>
<dbReference type="EC" id="2.7.7.7" evidence="1"/>
<dbReference type="EMBL" id="AP009324">
    <property type="protein sequence ID" value="BAF78763.1"/>
    <property type="molecule type" value="Genomic_DNA"/>
</dbReference>
<dbReference type="RefSeq" id="WP_000140172.1">
    <property type="nucleotide sequence ID" value="NC_009782.1"/>
</dbReference>
<dbReference type="SMR" id="A7X420"/>
<dbReference type="KEGG" id="saw:SAHV_1880"/>
<dbReference type="HOGENOM" id="CLU_012348_1_2_9"/>
<dbReference type="GO" id="GO:0005829">
    <property type="term" value="C:cytosol"/>
    <property type="evidence" value="ECO:0007669"/>
    <property type="project" value="TreeGrafter"/>
</dbReference>
<dbReference type="GO" id="GO:0003684">
    <property type="term" value="F:damaged DNA binding"/>
    <property type="evidence" value="ECO:0007669"/>
    <property type="project" value="InterPro"/>
</dbReference>
<dbReference type="GO" id="GO:0003887">
    <property type="term" value="F:DNA-directed DNA polymerase activity"/>
    <property type="evidence" value="ECO:0007669"/>
    <property type="project" value="UniProtKB-UniRule"/>
</dbReference>
<dbReference type="GO" id="GO:0000287">
    <property type="term" value="F:magnesium ion binding"/>
    <property type="evidence" value="ECO:0007669"/>
    <property type="project" value="UniProtKB-UniRule"/>
</dbReference>
<dbReference type="GO" id="GO:0006261">
    <property type="term" value="P:DNA-templated DNA replication"/>
    <property type="evidence" value="ECO:0007669"/>
    <property type="project" value="UniProtKB-UniRule"/>
</dbReference>
<dbReference type="GO" id="GO:0042276">
    <property type="term" value="P:error-prone translesion synthesis"/>
    <property type="evidence" value="ECO:0007669"/>
    <property type="project" value="TreeGrafter"/>
</dbReference>
<dbReference type="GO" id="GO:0009432">
    <property type="term" value="P:SOS response"/>
    <property type="evidence" value="ECO:0007669"/>
    <property type="project" value="TreeGrafter"/>
</dbReference>
<dbReference type="CDD" id="cd03586">
    <property type="entry name" value="PolY_Pol_IV_kappa"/>
    <property type="match status" value="1"/>
</dbReference>
<dbReference type="FunFam" id="3.30.1490.100:FF:000004">
    <property type="entry name" value="DNA polymerase IV"/>
    <property type="match status" value="1"/>
</dbReference>
<dbReference type="FunFam" id="3.40.1170.60:FF:000001">
    <property type="entry name" value="DNA polymerase IV"/>
    <property type="match status" value="1"/>
</dbReference>
<dbReference type="Gene3D" id="3.30.70.270">
    <property type="match status" value="1"/>
</dbReference>
<dbReference type="Gene3D" id="3.40.1170.60">
    <property type="match status" value="1"/>
</dbReference>
<dbReference type="Gene3D" id="1.10.150.20">
    <property type="entry name" value="5' to 3' exonuclease, C-terminal subdomain"/>
    <property type="match status" value="1"/>
</dbReference>
<dbReference type="Gene3D" id="3.30.1490.100">
    <property type="entry name" value="DNA polymerase, Y-family, little finger domain"/>
    <property type="match status" value="1"/>
</dbReference>
<dbReference type="HAMAP" id="MF_01113">
    <property type="entry name" value="DNApol_IV"/>
    <property type="match status" value="1"/>
</dbReference>
<dbReference type="InterPro" id="IPR043502">
    <property type="entry name" value="DNA/RNA_pol_sf"/>
</dbReference>
<dbReference type="InterPro" id="IPR036775">
    <property type="entry name" value="DNA_pol_Y-fam_lit_finger_sf"/>
</dbReference>
<dbReference type="InterPro" id="IPR017961">
    <property type="entry name" value="DNA_pol_Y-fam_little_finger"/>
</dbReference>
<dbReference type="InterPro" id="IPR050116">
    <property type="entry name" value="DNA_polymerase-Y"/>
</dbReference>
<dbReference type="InterPro" id="IPR022880">
    <property type="entry name" value="DNApol_IV"/>
</dbReference>
<dbReference type="InterPro" id="IPR043128">
    <property type="entry name" value="Rev_trsase/Diguanyl_cyclase"/>
</dbReference>
<dbReference type="InterPro" id="IPR001126">
    <property type="entry name" value="UmuC"/>
</dbReference>
<dbReference type="NCBIfam" id="NF002677">
    <property type="entry name" value="PRK02406.1"/>
    <property type="match status" value="1"/>
</dbReference>
<dbReference type="NCBIfam" id="NF010731">
    <property type="entry name" value="PRK14133.1"/>
    <property type="match status" value="1"/>
</dbReference>
<dbReference type="PANTHER" id="PTHR11076:SF33">
    <property type="entry name" value="DNA POLYMERASE KAPPA"/>
    <property type="match status" value="1"/>
</dbReference>
<dbReference type="PANTHER" id="PTHR11076">
    <property type="entry name" value="DNA REPAIR POLYMERASE UMUC / TRANSFERASE FAMILY MEMBER"/>
    <property type="match status" value="1"/>
</dbReference>
<dbReference type="Pfam" id="PF00817">
    <property type="entry name" value="IMS"/>
    <property type="match status" value="1"/>
</dbReference>
<dbReference type="Pfam" id="PF11799">
    <property type="entry name" value="IMS_C"/>
    <property type="match status" value="1"/>
</dbReference>
<dbReference type="SUPFAM" id="SSF56672">
    <property type="entry name" value="DNA/RNA polymerases"/>
    <property type="match status" value="1"/>
</dbReference>
<dbReference type="SUPFAM" id="SSF100879">
    <property type="entry name" value="Lesion bypass DNA polymerase (Y-family), little finger domain"/>
    <property type="match status" value="1"/>
</dbReference>
<dbReference type="PROSITE" id="PS50173">
    <property type="entry name" value="UMUC"/>
    <property type="match status" value="1"/>
</dbReference>
<organism>
    <name type="scientific">Staphylococcus aureus (strain Mu3 / ATCC 700698)</name>
    <dbReference type="NCBI Taxonomy" id="418127"/>
    <lineage>
        <taxon>Bacteria</taxon>
        <taxon>Bacillati</taxon>
        <taxon>Bacillota</taxon>
        <taxon>Bacilli</taxon>
        <taxon>Bacillales</taxon>
        <taxon>Staphylococcaceae</taxon>
        <taxon>Staphylococcus</taxon>
    </lineage>
</organism>
<proteinExistence type="inferred from homology"/>
<sequence>MTERRIIHIDMDYFFAQVEMRDNPKLKGKPVIVGGKASSRGVVSTASYEARKYGVHSAMPMSQAHKLCPNGYFVTSNFGAYRETSAQIMSIFRSYTDKVEPMSLDEAYLDITELVRPDLPASKIAQYIRKDILEQTHLTASAGVSYNKFLAKLASGMNKPDGLTVIDYQNVHDILMTLDIGDFPGVGKASKKVMHDNGIFNGRDLYEKTEFELIRLFGKRGRGLYNKARGIDHSEVKSSRVRKSVGTERTFATDVNDDEEILRKVWELSGKTAERLNKLQKSAKTVTVKIKTYQFETLSKQMSLRDSVSSEEDIYNIAYLLYNDLKDPDVPIRLIGVTVGNLEQSTYKNMTIYDFI</sequence>
<name>DPO4_STAA1</name>
<gene>
    <name evidence="1" type="primary">dinB</name>
    <name type="ordered locus">SAHV_1880</name>
</gene>
<reference key="1">
    <citation type="journal article" date="2008" name="Antimicrob. Agents Chemother.">
        <title>Mutated response regulator graR is responsible for phenotypic conversion of Staphylococcus aureus from heterogeneous vancomycin-intermediate resistance to vancomycin-intermediate resistance.</title>
        <authorList>
            <person name="Neoh H.-M."/>
            <person name="Cui L."/>
            <person name="Yuzawa H."/>
            <person name="Takeuchi F."/>
            <person name="Matsuo M."/>
            <person name="Hiramatsu K."/>
        </authorList>
    </citation>
    <scope>NUCLEOTIDE SEQUENCE [LARGE SCALE GENOMIC DNA]</scope>
    <source>
        <strain>Mu3 / ATCC 700698</strain>
    </source>
</reference>
<feature type="chain" id="PRO_1000084943" description="DNA polymerase IV">
    <location>
        <begin position="1"/>
        <end position="356"/>
    </location>
</feature>
<feature type="domain" description="UmuC" evidence="1">
    <location>
        <begin position="6"/>
        <end position="187"/>
    </location>
</feature>
<feature type="active site" evidence="1">
    <location>
        <position position="106"/>
    </location>
</feature>
<feature type="binding site" evidence="1">
    <location>
        <position position="10"/>
    </location>
    <ligand>
        <name>Mg(2+)</name>
        <dbReference type="ChEBI" id="CHEBI:18420"/>
    </ligand>
</feature>
<feature type="binding site" evidence="1">
    <location>
        <position position="105"/>
    </location>
    <ligand>
        <name>Mg(2+)</name>
        <dbReference type="ChEBI" id="CHEBI:18420"/>
    </ligand>
</feature>
<feature type="site" description="Substrate discrimination" evidence="1">
    <location>
        <position position="15"/>
    </location>
</feature>
<protein>
    <recommendedName>
        <fullName evidence="1">DNA polymerase IV</fullName>
        <shortName evidence="1">Pol IV</shortName>
        <ecNumber evidence="1">2.7.7.7</ecNumber>
    </recommendedName>
</protein>
<comment type="function">
    <text evidence="1">Poorly processive, error-prone DNA polymerase involved in untargeted mutagenesis. Copies undamaged DNA at stalled replication forks, which arise in vivo from mismatched or misaligned primer ends. These misaligned primers can be extended by PolIV. Exhibits no 3'-5' exonuclease (proofreading) activity. May be involved in translesional synthesis, in conjunction with the beta clamp from PolIII.</text>
</comment>
<comment type="catalytic activity">
    <reaction evidence="1">
        <text>DNA(n) + a 2'-deoxyribonucleoside 5'-triphosphate = DNA(n+1) + diphosphate</text>
        <dbReference type="Rhea" id="RHEA:22508"/>
        <dbReference type="Rhea" id="RHEA-COMP:17339"/>
        <dbReference type="Rhea" id="RHEA-COMP:17340"/>
        <dbReference type="ChEBI" id="CHEBI:33019"/>
        <dbReference type="ChEBI" id="CHEBI:61560"/>
        <dbReference type="ChEBI" id="CHEBI:173112"/>
        <dbReference type="EC" id="2.7.7.7"/>
    </reaction>
</comment>
<comment type="cofactor">
    <cofactor evidence="1">
        <name>Mg(2+)</name>
        <dbReference type="ChEBI" id="CHEBI:18420"/>
    </cofactor>
    <text evidence="1">Binds 2 magnesium ions per subunit.</text>
</comment>
<comment type="subunit">
    <text evidence="1">Monomer.</text>
</comment>
<comment type="subcellular location">
    <subcellularLocation>
        <location evidence="1">Cytoplasm</location>
    </subcellularLocation>
</comment>
<comment type="similarity">
    <text evidence="1">Belongs to the DNA polymerase type-Y family.</text>
</comment>
<accession>A7X420</accession>